<reference key="1">
    <citation type="journal article" date="1999" name="Biochem. J.">
        <title>Sequence-divergent units of the ABA-1 polyprotein array of the nematode Ascaris suum have similar fatty-acid- and retinol-binding properties but different binding-site environments.</title>
        <authorList>
            <person name="Moore J."/>
            <person name="McDermott L."/>
            <person name="Price N.C."/>
            <person name="Kelly S.M."/>
            <person name="Cooper A."/>
            <person name="Kennedy M.W."/>
        </authorList>
    </citation>
    <scope>NUCLEOTIDE SEQUENCE [MRNA] OF 1-1095</scope>
</reference>
<reference key="2">
    <citation type="journal article" date="1993" name="Mol. Biochem. Parasitol.">
        <title>A cDNA encoding repeating units of the ABA-1 allergen of Ascaris.</title>
        <authorList>
            <person name="Spence H.J."/>
            <person name="Moore J."/>
            <person name="Brass A."/>
            <person name="Kennedy M.W."/>
        </authorList>
    </citation>
    <scope>NUCLEOTIDE SEQUENCE [MRNA] OF 971-1365</scope>
    <source>
        <tissue>Larva</tissue>
    </source>
</reference>
<reference key="3">
    <citation type="journal article" date="1993" name="Clin. Exp. Immunol.">
        <title>The ABA-1 allergen of the nematode Ascaris suum: epitope stability, mass spectrometry, and N-terminal sequence comparison with its homologue in Toxocara canis.</title>
        <authorList>
            <person name="Christie J.F."/>
            <person name="Dunbar B."/>
            <person name="Kennedy M.W."/>
        </authorList>
    </citation>
    <scope>PROTEIN SEQUENCE OF 1066-1133</scope>
</reference>
<reference key="4">
    <citation type="journal article" date="1990" name="Immunology">
        <title>N-terminal amino acid sequence identity between a major allergen of Ascaris lumbricoides and Ascaris suum, and MHC-restricted IgE responses to it.</title>
        <authorList>
            <person name="Christie J.F."/>
            <person name="Dunbar B."/>
            <person name="Davidson I."/>
            <person name="Kennedy M.W."/>
        </authorList>
    </citation>
    <scope>PROTEIN SEQUENCE OF 1066-1106</scope>
</reference>
<reference key="5">
    <citation type="journal article" date="1990" name="Mol. Biochem. Parasitol.">
        <title>Identification of the major Ascaris allergen and its purification to homogeneity by high-performance liquid chromatography.</title>
        <authorList>
            <person name="McGibbon A.M."/>
            <person name="Christie J.F."/>
            <person name="Kennedy M.W."/>
            <person name="Lee T.D."/>
        </authorList>
    </citation>
    <scope>PROTEIN SEQUENCE OF 1066-1075</scope>
</reference>
<reference key="6">
    <citation type="journal article" date="1995" name="Biochemistry">
        <title>The ABA-1 allergen of the parasitic nematode Ascaris suum: fatty acid and retinoid binding function and structural characterization.</title>
        <authorList>
            <person name="Kennedy M.W."/>
            <person name="Brasss A."/>
            <person name="McCruden A.B."/>
            <person name="Price N.C."/>
            <person name="Kelly S.M."/>
            <person name="Cooper A."/>
        </authorList>
    </citation>
    <scope>CHARACTERIZATION</scope>
</reference>
<proteinExistence type="evidence at protein level"/>
<keyword id="KW-0002">3D-structure</keyword>
<keyword id="KW-0020">Allergen</keyword>
<keyword id="KW-0165">Cleavage on pair of basic residues</keyword>
<keyword id="KW-0903">Direct protein sequencing</keyword>
<keyword id="KW-0446">Lipid-binding</keyword>
<keyword id="KW-0677">Repeat</keyword>
<keyword id="KW-0683">Retinol-binding</keyword>
<sequence>TMEHYLKTYLSWLTEEQKEKLKEMKEAGKTKAEIQHEVMHYYDQLHGEEKQQATEKLKVGCKMLLKGIIGEEKVVELRNMKEAGADIQELQQKVEKMLSEVTDEKQKEKVHEYGPACKKIFGATTLQHHRRRRHHFTLESSLDTHLKWLSQEQKDELLKMKKDGKTKKELEAKILHYYDELEGDAKKEATEHLKGGCGEILKHVVGEEKAAELKNLKDSGASKEELKAKVEEALHAVTDEEKKQYIADFGPACKKIYGVHTSRRRRHHFTLESSLDTHLKWLSQEQKDELLKMKKDGKAKKELEAKILHYYDELEGDAKKEATEHLKGGCAEILKHVVGEEKAAELKNLKDSGASKEELKAKVEEALHAVTDEEKKQYIADFGPACKKIYGVHTSRRRRHHFTLESSLDTHLKWLSQEQKDELLKMKKDGKTKKDLQAKILHYYDELEGDAKKEATEHLKDGCREILKHVVGEEKEAELKKLKDSGASKEEVKAKVEEALHAVTDEEKKQYIADFGPACKKIFGAAHTSRRRRHHFTLESSLDTHLKWLSQEQKDELLKMKKDGKAKKELEAKILHYYDELEGDAKKEATEHLKGGCREILKHVVGEEKAAELKNLKDSGASKEELKAKVEEALHAVTDEEKKQYIADFGPACKKIYGVHTSRRRRHHFTLESSLDTHLKWLSQEQKDELLKMKKDGKAKKELEAKILHYYDELEGDAKKEATEHLKGGCREILKHVVGEEKAAELKNLKDSGASKEELKAKVEEALHAVTDEEKKQYIADFGPACKKIYGVHTSRRRRHHFTLESSLDTHLKWLSQEQKDELLKMKKDGKAKKELEAKILHYYDELEGDAKKEATEHLKGGCREILKHVVGEEKAAELKNLKDSGASKEELKAKVEEALHAVTDEEKKQYIADFGPACKKIYGVHTSRRRRHHFTLESSLDTHLKWLSQEQKDELLKMKKDGKAKKELEAKILHYYDELEGDAKKEATEHLKGGCREILKHVVGEEKAAELKNLKDSGASKEELKAKVEEALHAVTDEEKKQYIADFGPACKKIYGVHTSRRRRHHFTLESSLDTHLKWLSQEQKDELLKMKKDGKAKKELEAKILHYYDELEGDAKKEATEHLKGGCREILKHVVGEEKAAELKNLKDSGASKEELKAKVEEALHAVTDEEKKQYIADFGPACKKIYGVHTSRRRRHHFTLESSLDTHLKWLSQEQKDELLKMKKDGKAKKELEAKILHYYDELEGDAKKEATEHLKGGCREILKHVVGEEKAAELKNLKDSGASKEELKAKVEEALHAVTDEEKKQYIADFGPACKKIYGVHTSRRRRYHAEDGTDDIDGLAQSRQRRSGFFEKLIDVFAFF</sequence>
<comment type="function">
    <text>Has high binding affinity for fatty acids and retinoids.</text>
</comment>
<comment type="tissue specificity">
    <text>Pseudocoelomic fluid.</text>
</comment>
<comment type="PTM">
    <text>Nematode polyprotein allergens (NPAs) are synthesized as large polypeptides that are subsequently proteolytically cleaved to active polypeptide units.</text>
</comment>
<comment type="allergen">
    <text>Causes an allergic reaction in human.</text>
</comment>
<comment type="similarity">
    <text evidence="2">Belongs to the NPA family.</text>
</comment>
<accession>Q06811</accession>
<accession>O61566</accession>
<accession>Q9TWU7</accession>
<gene>
    <name type="primary">ABA-1</name>
</gene>
<name>ABA1_ASCSU</name>
<evidence type="ECO:0000255" key="1"/>
<evidence type="ECO:0000305" key="2"/>
<evidence type="ECO:0007829" key="3">
    <source>
        <dbReference type="PDB" id="2XV9"/>
    </source>
</evidence>
<feature type="chain" id="PRO_0000287126" description="Polyprotein ABA-1">
    <location>
        <begin position="1" status="less than"/>
        <end position="1365"/>
    </location>
</feature>
<feature type="peptide" id="PRO_0000042221" description="ABA-1B1 repeat unit" evidence="2">
    <location>
        <begin position="1" status="less than"/>
        <end position="133"/>
    </location>
</feature>
<feature type="peptide" id="PRO_0000042222" description="ABA-1A4 repeat unit" evidence="2">
    <location>
        <begin position="134"/>
        <end position="266"/>
    </location>
</feature>
<feature type="peptide" id="PRO_0000042223" description="ABA-1A3 repeat unit" evidence="2">
    <location>
        <begin position="267"/>
        <end position="399"/>
    </location>
</feature>
<feature type="peptide" id="PRO_0000042224" description="ABA-1A2 repeat unit" evidence="2">
    <location>
        <begin position="400"/>
        <end position="533"/>
    </location>
</feature>
<feature type="peptide" id="PRO_0000042225" description="ABA-1A1 repeat unit" evidence="2">
    <location>
        <begin position="534"/>
        <end position="666"/>
    </location>
</feature>
<feature type="peptide" id="PRO_0000042226" description="ABA-1A1 repeat unit" evidence="2">
    <location>
        <begin position="667"/>
        <end position="799"/>
    </location>
</feature>
<feature type="peptide" id="PRO_0000042227" description="ABA-1A1 repeat unit" evidence="2">
    <location>
        <begin position="800"/>
        <end position="932"/>
    </location>
</feature>
<feature type="peptide" id="PRO_0000042228" description="ABA-1A1 repeat unit" evidence="2">
    <location>
        <begin position="933"/>
        <end position="1065"/>
    </location>
</feature>
<feature type="peptide" id="PRO_0000020606" description="ABA-1A1 repeat unit" evidence="2">
    <location>
        <begin position="1066"/>
        <end position="1198"/>
    </location>
</feature>
<feature type="peptide" id="PRO_0000020607" description="ABA-1A1 repeat unit" evidence="2">
    <location>
        <begin position="1199"/>
        <end position="1331"/>
    </location>
</feature>
<feature type="peptide" id="PRO_0000020608" description="C-terminal extension peptide" evidence="1">
    <location>
        <begin position="1332"/>
        <end position="1365"/>
    </location>
</feature>
<feature type="non-terminal residue">
    <location>
        <position position="1"/>
    </location>
</feature>
<feature type="strand" evidence="3">
    <location>
        <begin position="1199"/>
        <end position="1201"/>
    </location>
</feature>
<feature type="helix" evidence="3">
    <location>
        <begin position="1204"/>
        <end position="1206"/>
    </location>
</feature>
<feature type="turn" evidence="3">
    <location>
        <begin position="1207"/>
        <end position="1213"/>
    </location>
</feature>
<feature type="helix" evidence="3">
    <location>
        <begin position="1216"/>
        <end position="1227"/>
    </location>
</feature>
<feature type="helix" evidence="3">
    <location>
        <begin position="1232"/>
        <end position="1244"/>
    </location>
</feature>
<feature type="helix" evidence="3">
    <location>
        <begin position="1248"/>
        <end position="1269"/>
    </location>
</feature>
<feature type="helix" evidence="3">
    <location>
        <begin position="1271"/>
        <end position="1284"/>
    </location>
</feature>
<feature type="helix" evidence="3">
    <location>
        <begin position="1288"/>
        <end position="1298"/>
    </location>
</feature>
<feature type="helix" evidence="3">
    <location>
        <begin position="1305"/>
        <end position="1313"/>
    </location>
</feature>
<feature type="helix" evidence="3">
    <location>
        <begin position="1315"/>
        <end position="1321"/>
    </location>
</feature>
<organism>
    <name type="scientific">Ascaris suum</name>
    <name type="common">Pig roundworm</name>
    <name type="synonym">Ascaris lumbricoides</name>
    <dbReference type="NCBI Taxonomy" id="6253"/>
    <lineage>
        <taxon>Eukaryota</taxon>
        <taxon>Metazoa</taxon>
        <taxon>Ecdysozoa</taxon>
        <taxon>Nematoda</taxon>
        <taxon>Chromadorea</taxon>
        <taxon>Rhabditida</taxon>
        <taxon>Spirurina</taxon>
        <taxon>Ascaridomorpha</taxon>
        <taxon>Ascaridoidea</taxon>
        <taxon>Ascarididae</taxon>
        <taxon>Ascaris</taxon>
    </lineage>
</organism>
<dbReference type="EMBL" id="AF051702">
    <property type="protein sequence ID" value="AAC06015.1"/>
    <property type="molecule type" value="mRNA"/>
</dbReference>
<dbReference type="EMBL" id="L03211">
    <property type="protein sequence ID" value="AAB41117.1"/>
    <property type="molecule type" value="mRNA"/>
</dbReference>
<dbReference type="PIR" id="A48576">
    <property type="entry name" value="A48576"/>
</dbReference>
<dbReference type="PIR" id="T31423">
    <property type="entry name" value="T31423"/>
</dbReference>
<dbReference type="PDB" id="2XV9">
    <property type="method" value="NMR"/>
    <property type="chains" value="A=534-662"/>
</dbReference>
<dbReference type="PDBsum" id="2XV9"/>
<dbReference type="SMR" id="Q06811"/>
<dbReference type="Allergome" id="3541">
    <property type="allergen name" value="Asc s 1.0101"/>
</dbReference>
<dbReference type="Allergome" id="61">
    <property type="allergen name" value="Asc s 1"/>
</dbReference>
<dbReference type="EvolutionaryTrace" id="Q06811"/>
<dbReference type="GO" id="GO:0019841">
    <property type="term" value="F:retinol binding"/>
    <property type="evidence" value="ECO:0007669"/>
    <property type="project" value="UniProtKB-KW"/>
</dbReference>
<dbReference type="Gene3D" id="1.10.533.30">
    <property type="entry name" value="Nematode polyprotein allergen ABA-1"/>
    <property type="match status" value="10"/>
</dbReference>
<dbReference type="InterPro" id="IPR032487">
    <property type="entry name" value="ABA-1_nematode"/>
</dbReference>
<dbReference type="InterPro" id="IPR038289">
    <property type="entry name" value="DVA-1_sf"/>
</dbReference>
<dbReference type="Pfam" id="PF16469">
    <property type="entry name" value="NPA"/>
    <property type="match status" value="10"/>
</dbReference>
<protein>
    <recommendedName>
        <fullName>Polyprotein ABA-1</fullName>
    </recommendedName>
    <alternativeName>
        <fullName>Body fluid allergen 1</fullName>
    </alternativeName>
    <alternativeName>
        <fullName>Nematode polyprotein allergen ABA-1</fullName>
        <shortName>NPA ABA-1</shortName>
    </alternativeName>
    <allergenName>Asc s 1</allergenName>
    <component>
        <recommendedName>
            <fullName>ABA-1B1 repeat unit</fullName>
        </recommendedName>
    </component>
    <component>
        <recommendedName>
            <fullName>ABA-1A4 repeat unit</fullName>
        </recommendedName>
    </component>
    <component>
        <recommendedName>
            <fullName>ABA-1A3 repeat unit</fullName>
        </recommendedName>
    </component>
    <component>
        <recommendedName>
            <fullName>ABA-1A2 repeat unit</fullName>
        </recommendedName>
    </component>
    <component>
        <recommendedName>
            <fullName>ABA-1A1 repeat unit</fullName>
        </recommendedName>
    </component>
    <component>
        <recommendedName>
            <fullName>C-terminal extension peptide</fullName>
        </recommendedName>
    </component>
</protein>